<gene>
    <name evidence="1" type="primary">psbE</name>
</gene>
<feature type="chain" id="PRO_0000275704" description="Cytochrome b559 subunit alpha">
    <location>
        <begin position="1"/>
        <end position="83"/>
    </location>
</feature>
<feature type="transmembrane region" description="Helical" evidence="1">
    <location>
        <begin position="21"/>
        <end position="35"/>
    </location>
</feature>
<feature type="binding site" description="axial binding residue" evidence="1">
    <location>
        <position position="23"/>
    </location>
    <ligand>
        <name>heme</name>
        <dbReference type="ChEBI" id="CHEBI:30413"/>
        <note>ligand shared with beta subunit</note>
    </ligand>
    <ligandPart>
        <name>Fe</name>
        <dbReference type="ChEBI" id="CHEBI:18248"/>
    </ligandPart>
</feature>
<proteinExistence type="inferred from homology"/>
<accession>A0A352</accession>
<organism>
    <name type="scientific">Coffea arabica</name>
    <name type="common">Arabian coffee</name>
    <dbReference type="NCBI Taxonomy" id="13443"/>
    <lineage>
        <taxon>Eukaryota</taxon>
        <taxon>Viridiplantae</taxon>
        <taxon>Streptophyta</taxon>
        <taxon>Embryophyta</taxon>
        <taxon>Tracheophyta</taxon>
        <taxon>Spermatophyta</taxon>
        <taxon>Magnoliopsida</taxon>
        <taxon>eudicotyledons</taxon>
        <taxon>Gunneridae</taxon>
        <taxon>Pentapetalae</taxon>
        <taxon>asterids</taxon>
        <taxon>lamiids</taxon>
        <taxon>Gentianales</taxon>
        <taxon>Rubiaceae</taxon>
        <taxon>Ixoroideae</taxon>
        <taxon>Gardenieae complex</taxon>
        <taxon>Bertiereae - Coffeeae clade</taxon>
        <taxon>Coffeeae</taxon>
        <taxon>Coffea</taxon>
    </lineage>
</organism>
<name>PSBE_COFAR</name>
<evidence type="ECO:0000255" key="1">
    <source>
        <dbReference type="HAMAP-Rule" id="MF_00642"/>
    </source>
</evidence>
<sequence length="83" mass="9397">MSGSTGERSFADIITSIRYWVIHSITIPSLFIAGWLFVSTGLAYDVFGSPRPNEYFTESRQGIPLITGRFDPLEQLDEFSRSF</sequence>
<protein>
    <recommendedName>
        <fullName evidence="1">Cytochrome b559 subunit alpha</fullName>
    </recommendedName>
    <alternativeName>
        <fullName evidence="1">PSII reaction center subunit V</fullName>
    </alternativeName>
</protein>
<geneLocation type="chloroplast"/>
<dbReference type="EMBL" id="EF044213">
    <property type="protein sequence ID" value="ABJ89696.1"/>
    <property type="molecule type" value="Genomic_DNA"/>
</dbReference>
<dbReference type="RefSeq" id="YP_817499.1">
    <property type="nucleotide sequence ID" value="NC_008535.1"/>
</dbReference>
<dbReference type="SMR" id="A0A352"/>
<dbReference type="GeneID" id="4421780"/>
<dbReference type="OrthoDB" id="1839964at2759"/>
<dbReference type="Proteomes" id="UP000515148">
    <property type="component" value="Chloroplast Pltd"/>
</dbReference>
<dbReference type="GO" id="GO:0009535">
    <property type="term" value="C:chloroplast thylakoid membrane"/>
    <property type="evidence" value="ECO:0007669"/>
    <property type="project" value="UniProtKB-SubCell"/>
</dbReference>
<dbReference type="GO" id="GO:0009539">
    <property type="term" value="C:photosystem II reaction center"/>
    <property type="evidence" value="ECO:0007669"/>
    <property type="project" value="InterPro"/>
</dbReference>
<dbReference type="GO" id="GO:0009055">
    <property type="term" value="F:electron transfer activity"/>
    <property type="evidence" value="ECO:0007669"/>
    <property type="project" value="UniProtKB-UniRule"/>
</dbReference>
<dbReference type="GO" id="GO:0020037">
    <property type="term" value="F:heme binding"/>
    <property type="evidence" value="ECO:0007669"/>
    <property type="project" value="InterPro"/>
</dbReference>
<dbReference type="GO" id="GO:0005506">
    <property type="term" value="F:iron ion binding"/>
    <property type="evidence" value="ECO:0007669"/>
    <property type="project" value="UniProtKB-UniRule"/>
</dbReference>
<dbReference type="GO" id="GO:0009767">
    <property type="term" value="P:photosynthetic electron transport chain"/>
    <property type="evidence" value="ECO:0007669"/>
    <property type="project" value="InterPro"/>
</dbReference>
<dbReference type="Gene3D" id="1.20.5.860">
    <property type="entry name" value="Photosystem II cytochrome b559, alpha subunit"/>
    <property type="match status" value="1"/>
</dbReference>
<dbReference type="HAMAP" id="MF_00642">
    <property type="entry name" value="PSII_PsbE"/>
    <property type="match status" value="1"/>
</dbReference>
<dbReference type="InterPro" id="IPR006217">
    <property type="entry name" value="PSII_cyt_b559_asu"/>
</dbReference>
<dbReference type="InterPro" id="IPR037025">
    <property type="entry name" value="PSII_cyt_b559_asu_sf"/>
</dbReference>
<dbReference type="InterPro" id="IPR006216">
    <property type="entry name" value="PSII_cyt_b559_CS"/>
</dbReference>
<dbReference type="InterPro" id="IPR013081">
    <property type="entry name" value="PSII_cyt_b559_N"/>
</dbReference>
<dbReference type="InterPro" id="IPR013082">
    <property type="entry name" value="PSII_cytb559_asu_lum"/>
</dbReference>
<dbReference type="NCBIfam" id="TIGR01332">
    <property type="entry name" value="cyt_b559_alpha"/>
    <property type="match status" value="1"/>
</dbReference>
<dbReference type="PANTHER" id="PTHR33391">
    <property type="entry name" value="CYTOCHROME B559 SUBUNIT BETA-RELATED"/>
    <property type="match status" value="1"/>
</dbReference>
<dbReference type="PANTHER" id="PTHR33391:SF9">
    <property type="entry name" value="CYTOCHROME B559 SUBUNIT BETA-RELATED"/>
    <property type="match status" value="1"/>
</dbReference>
<dbReference type="Pfam" id="PF00283">
    <property type="entry name" value="Cytochrom_B559"/>
    <property type="match status" value="1"/>
</dbReference>
<dbReference type="Pfam" id="PF00284">
    <property type="entry name" value="Cytochrom_B559a"/>
    <property type="match status" value="1"/>
</dbReference>
<dbReference type="PIRSF" id="PIRSF000036">
    <property type="entry name" value="PsbE"/>
    <property type="match status" value="1"/>
</dbReference>
<dbReference type="SUPFAM" id="SSF161045">
    <property type="entry name" value="Cytochrome b559 subunits"/>
    <property type="match status" value="1"/>
</dbReference>
<dbReference type="PROSITE" id="PS00537">
    <property type="entry name" value="CYTOCHROME_B559"/>
    <property type="match status" value="1"/>
</dbReference>
<comment type="function">
    <text evidence="1">This b-type cytochrome is tightly associated with the reaction center of photosystem II (PSII). PSII is a light-driven water:plastoquinone oxidoreductase that uses light energy to abstract electrons from H(2)O, generating O(2) and a proton gradient subsequently used for ATP formation. It consists of a core antenna complex that captures photons, and an electron transfer chain that converts photonic excitation into a charge separation.</text>
</comment>
<comment type="cofactor">
    <cofactor evidence="1">
        <name>heme b</name>
        <dbReference type="ChEBI" id="CHEBI:60344"/>
    </cofactor>
    <text evidence="1">With its partner (PsbF) binds heme. PSII binds additional chlorophylls, carotenoids and specific lipids.</text>
</comment>
<comment type="subunit">
    <text evidence="1">Heterodimer of an alpha subunit and a beta subunit. PSII is composed of 1 copy each of membrane proteins PsbA, PsbB, PsbC, PsbD, PsbE, PsbF, PsbH, PsbI, PsbJ, PsbK, PsbL, PsbM, PsbT, PsbX, PsbY, PsbZ, Psb30/Ycf12, at least 3 peripheral proteins of the oxygen-evolving complex and a large number of cofactors. It forms dimeric complexes.</text>
</comment>
<comment type="subcellular location">
    <subcellularLocation>
        <location evidence="1">Plastid</location>
        <location evidence="1">Chloroplast thylakoid membrane</location>
        <topology evidence="1">Single-pass membrane protein</topology>
    </subcellularLocation>
</comment>
<comment type="similarity">
    <text evidence="1">Belongs to the PsbE/PsbF family.</text>
</comment>
<keyword id="KW-0150">Chloroplast</keyword>
<keyword id="KW-0249">Electron transport</keyword>
<keyword id="KW-0349">Heme</keyword>
<keyword id="KW-0408">Iron</keyword>
<keyword id="KW-0472">Membrane</keyword>
<keyword id="KW-0479">Metal-binding</keyword>
<keyword id="KW-0602">Photosynthesis</keyword>
<keyword id="KW-0604">Photosystem II</keyword>
<keyword id="KW-0934">Plastid</keyword>
<keyword id="KW-1185">Reference proteome</keyword>
<keyword id="KW-0793">Thylakoid</keyword>
<keyword id="KW-0812">Transmembrane</keyword>
<keyword id="KW-1133">Transmembrane helix</keyword>
<keyword id="KW-0813">Transport</keyword>
<reference key="1">
    <citation type="journal article" date="2007" name="Plant Biotechnol. J.">
        <title>The complete nucleotide sequence of the coffee (Coffea arabica L.) chloroplast genome: organization and implications for biotechnology and phylogenetic relationships amongst angiosperms.</title>
        <authorList>
            <person name="Samson N."/>
            <person name="Bausher M.G."/>
            <person name="Lee S.-B."/>
            <person name="Jansen R.K."/>
            <person name="Daniell H."/>
        </authorList>
    </citation>
    <scope>NUCLEOTIDE SEQUENCE [LARGE SCALE GENOMIC DNA]</scope>
</reference>